<comment type="subcellular location">
    <subcellularLocation>
        <location evidence="1">Cytoplasm</location>
    </subcellularLocation>
</comment>
<comment type="similarity">
    <text evidence="1">Belongs to the UPF0294 family.</text>
</comment>
<name>Y1050_YERP3</name>
<evidence type="ECO:0000255" key="1">
    <source>
        <dbReference type="HAMAP-Rule" id="MF_01119"/>
    </source>
</evidence>
<feature type="chain" id="PRO_1000065260" description="UPF0294 protein YpsIP31758_1050">
    <location>
        <begin position="1"/>
        <end position="260"/>
    </location>
</feature>
<accession>A7FFK3</accession>
<dbReference type="EMBL" id="CP000720">
    <property type="protein sequence ID" value="ABS46966.1"/>
    <property type="molecule type" value="Genomic_DNA"/>
</dbReference>
<dbReference type="RefSeq" id="WP_002220059.1">
    <property type="nucleotide sequence ID" value="NC_009708.1"/>
</dbReference>
<dbReference type="SMR" id="A7FFK3"/>
<dbReference type="KEGG" id="ypi:YpsIP31758_1050"/>
<dbReference type="HOGENOM" id="CLU_083563_0_0_6"/>
<dbReference type="Proteomes" id="UP000002412">
    <property type="component" value="Chromosome"/>
</dbReference>
<dbReference type="GO" id="GO:0005737">
    <property type="term" value="C:cytoplasm"/>
    <property type="evidence" value="ECO:0007669"/>
    <property type="project" value="UniProtKB-SubCell"/>
</dbReference>
<dbReference type="GO" id="GO:0003824">
    <property type="term" value="F:catalytic activity"/>
    <property type="evidence" value="ECO:0007669"/>
    <property type="project" value="InterPro"/>
</dbReference>
<dbReference type="Gene3D" id="3.60.10.10">
    <property type="entry name" value="Endonuclease/exonuclease/phosphatase"/>
    <property type="match status" value="1"/>
</dbReference>
<dbReference type="HAMAP" id="MF_01119">
    <property type="entry name" value="UPF0294"/>
    <property type="match status" value="1"/>
</dbReference>
<dbReference type="InterPro" id="IPR036691">
    <property type="entry name" value="Endo/exonu/phosph_ase_sf"/>
</dbReference>
<dbReference type="InterPro" id="IPR005135">
    <property type="entry name" value="Endo/exonuclease/phosphatase"/>
</dbReference>
<dbReference type="InterPro" id="IPR022958">
    <property type="entry name" value="UPF0294"/>
</dbReference>
<dbReference type="NCBIfam" id="NF003839">
    <property type="entry name" value="PRK05421.1-1"/>
    <property type="match status" value="1"/>
</dbReference>
<dbReference type="NCBIfam" id="NF003840">
    <property type="entry name" value="PRK05421.1-2"/>
    <property type="match status" value="1"/>
</dbReference>
<dbReference type="NCBIfam" id="NF003841">
    <property type="entry name" value="PRK05421.1-3"/>
    <property type="match status" value="1"/>
</dbReference>
<dbReference type="NCBIfam" id="NF003842">
    <property type="entry name" value="PRK05421.1-4"/>
    <property type="match status" value="1"/>
</dbReference>
<dbReference type="Pfam" id="PF03372">
    <property type="entry name" value="Exo_endo_phos"/>
    <property type="match status" value="1"/>
</dbReference>
<dbReference type="SUPFAM" id="SSF56219">
    <property type="entry name" value="DNase I-like"/>
    <property type="match status" value="1"/>
</dbReference>
<gene>
    <name type="ordered locus">YpsIP31758_1050</name>
</gene>
<protein>
    <recommendedName>
        <fullName evidence="1">UPF0294 protein YpsIP31758_1050</fullName>
    </recommendedName>
</protein>
<reference key="1">
    <citation type="journal article" date="2007" name="PLoS Genet.">
        <title>The complete genome sequence of Yersinia pseudotuberculosis IP31758, the causative agent of Far East scarlet-like fever.</title>
        <authorList>
            <person name="Eppinger M."/>
            <person name="Rosovitz M.J."/>
            <person name="Fricke W.F."/>
            <person name="Rasko D.A."/>
            <person name="Kokorina G."/>
            <person name="Fayolle C."/>
            <person name="Lindler L.E."/>
            <person name="Carniel E."/>
            <person name="Ravel J."/>
        </authorList>
    </citation>
    <scope>NUCLEOTIDE SEQUENCE [LARGE SCALE GENOMIC DNA]</scope>
    <source>
        <strain>IP 31758</strain>
    </source>
</reference>
<sequence length="260" mass="29051">MPKRTYAMRYVAGQPVEQIFPGAAKQLDKGLPLGEPLPTAELLRVVVWNIFKQQRAGWLPVLKELGRDTQLMLLQEAQTTPELVRFATASYQAADQVPAFSLPQHPSGVMTLAAAHPVYCCPLREREPLLRLSKSALVTVYPIHDGRLLMVVNIHAVNFSLGVDVYSKQLDPIGDQIASHRGPVILAGDFNAWSRQRINALQHFAQDAGLQEVEFRVDHRSRAFGRPLDFIFYRGLTVIDASVLVTRASDHNPLIVEFQP</sequence>
<proteinExistence type="inferred from homology"/>
<organism>
    <name type="scientific">Yersinia pseudotuberculosis serotype O:1b (strain IP 31758)</name>
    <dbReference type="NCBI Taxonomy" id="349747"/>
    <lineage>
        <taxon>Bacteria</taxon>
        <taxon>Pseudomonadati</taxon>
        <taxon>Pseudomonadota</taxon>
        <taxon>Gammaproteobacteria</taxon>
        <taxon>Enterobacterales</taxon>
        <taxon>Yersiniaceae</taxon>
        <taxon>Yersinia</taxon>
    </lineage>
</organism>
<keyword id="KW-0963">Cytoplasm</keyword>